<comment type="function">
    <text evidence="1">NDH-1 shuttles electrons from NADH, via FMN and iron-sulfur (Fe-S) centers, to quinones in the respiratory chain. The immediate electron acceptor for the enzyme in this species is believed to be ubiquinone. Couples the redox reaction to proton translocation (for every two electrons transferred, four hydrogen ions are translocated across the cytoplasmic membrane), and thus conserves the redox energy in a proton gradient.</text>
</comment>
<comment type="catalytic activity">
    <reaction evidence="1">
        <text>a quinone + NADH + 5 H(+)(in) = a quinol + NAD(+) + 4 H(+)(out)</text>
        <dbReference type="Rhea" id="RHEA:57888"/>
        <dbReference type="ChEBI" id="CHEBI:15378"/>
        <dbReference type="ChEBI" id="CHEBI:24646"/>
        <dbReference type="ChEBI" id="CHEBI:57540"/>
        <dbReference type="ChEBI" id="CHEBI:57945"/>
        <dbReference type="ChEBI" id="CHEBI:132124"/>
    </reaction>
</comment>
<comment type="cofactor">
    <cofactor evidence="1">
        <name>[4Fe-4S] cluster</name>
        <dbReference type="ChEBI" id="CHEBI:49883"/>
    </cofactor>
    <text evidence="1">Binds 1 [4Fe-4S] cluster.</text>
</comment>
<comment type="subunit">
    <text evidence="1">NDH-1 is composed of 14 different subunits. Subunits NuoB, C, D, E, F, and G constitute the peripheral sector of the complex.</text>
</comment>
<comment type="subcellular location">
    <subcellularLocation>
        <location evidence="1">Cell inner membrane</location>
        <topology evidence="1">Peripheral membrane protein</topology>
        <orientation evidence="1">Cytoplasmic side</orientation>
    </subcellularLocation>
</comment>
<comment type="similarity">
    <text evidence="1">Belongs to the complex I 20 kDa subunit family.</text>
</comment>
<feature type="chain" id="PRO_0000118775" description="NADH-quinone oxidoreductase subunit B 1">
    <location>
        <begin position="1"/>
        <end position="192"/>
    </location>
</feature>
<feature type="binding site" evidence="1">
    <location>
        <position position="71"/>
    </location>
    <ligand>
        <name>[4Fe-4S] cluster</name>
        <dbReference type="ChEBI" id="CHEBI:49883"/>
    </ligand>
</feature>
<feature type="binding site" evidence="1">
    <location>
        <position position="72"/>
    </location>
    <ligand>
        <name>[4Fe-4S] cluster</name>
        <dbReference type="ChEBI" id="CHEBI:49883"/>
    </ligand>
</feature>
<feature type="binding site" evidence="1">
    <location>
        <position position="136"/>
    </location>
    <ligand>
        <name>[4Fe-4S] cluster</name>
        <dbReference type="ChEBI" id="CHEBI:49883"/>
    </ligand>
</feature>
<feature type="binding site" evidence="1">
    <location>
        <position position="166"/>
    </location>
    <ligand>
        <name>[4Fe-4S] cluster</name>
        <dbReference type="ChEBI" id="CHEBI:49883"/>
    </ligand>
</feature>
<feature type="sequence conflict" description="In Ref. 1." evidence="2" ref="1">
    <original>MELASGTTLVAPQPKGILDPATGKPIGSNDAFF</original>
    <variation>MTLSV</variation>
    <location>
        <begin position="1"/>
        <end position="33"/>
    </location>
</feature>
<feature type="sequence conflict" description="In Ref. 1; AAC12755." evidence="2" ref="1">
    <original>MTFG</original>
    <variation>NELSV</variation>
    <location>
        <begin position="65"/>
        <end position="68"/>
    </location>
</feature>
<name>NUOB1_RHIME</name>
<gene>
    <name evidence="1" type="primary">nuoB1</name>
    <name type="ordered locus">R01265</name>
    <name type="ORF">SMc01913</name>
</gene>
<proteinExistence type="inferred from homology"/>
<sequence length="192" mass="21002">MELASGTTLVAPQPKGILDPATGKPIGSNDAFFGEINNELADKGFLVTSTDELINWARTGSLMWMTFGLACCAVEMMQMSMPRYDAERFGFAPRASPRQSDVMIVAGTLTNKMAPALRKVYDQMPEPRYVISMGSCANGGGYYHYSYSVVRGCDRVVPVDIYVPGCPPTAEALLYGVLLLQKKIRRTGTIER</sequence>
<keyword id="KW-0004">4Fe-4S</keyword>
<keyword id="KW-0997">Cell inner membrane</keyword>
<keyword id="KW-1003">Cell membrane</keyword>
<keyword id="KW-0408">Iron</keyword>
<keyword id="KW-0411">Iron-sulfur</keyword>
<keyword id="KW-0472">Membrane</keyword>
<keyword id="KW-0479">Metal-binding</keyword>
<keyword id="KW-0520">NAD</keyword>
<keyword id="KW-0874">Quinone</keyword>
<keyword id="KW-1185">Reference proteome</keyword>
<keyword id="KW-1278">Translocase</keyword>
<keyword id="KW-0813">Transport</keyword>
<keyword id="KW-0830">Ubiquinone</keyword>
<evidence type="ECO:0000255" key="1">
    <source>
        <dbReference type="HAMAP-Rule" id="MF_01356"/>
    </source>
</evidence>
<evidence type="ECO:0000305" key="2"/>
<accession>O68853</accession>
<dbReference type="EC" id="7.1.1.-" evidence="1"/>
<dbReference type="EMBL" id="AF055637">
    <property type="protein sequence ID" value="AAC12755.1"/>
    <property type="molecule type" value="Genomic_DNA"/>
</dbReference>
<dbReference type="EMBL" id="AJ245398">
    <property type="protein sequence ID" value="CAB51621.1"/>
    <property type="molecule type" value="Genomic_DNA"/>
</dbReference>
<dbReference type="EMBL" id="AL591688">
    <property type="protein sequence ID" value="CAC45844.1"/>
    <property type="molecule type" value="Genomic_DNA"/>
</dbReference>
<dbReference type="RefSeq" id="NP_385371.1">
    <property type="nucleotide sequence ID" value="NC_003047.1"/>
</dbReference>
<dbReference type="RefSeq" id="WP_003531828.1">
    <property type="nucleotide sequence ID" value="NC_003047.1"/>
</dbReference>
<dbReference type="SMR" id="O68853"/>
<dbReference type="EnsemblBacteria" id="CAC45844">
    <property type="protein sequence ID" value="CAC45844"/>
    <property type="gene ID" value="SMc01913"/>
</dbReference>
<dbReference type="KEGG" id="sme:SMc01913"/>
<dbReference type="PATRIC" id="fig|266834.11.peg.2679"/>
<dbReference type="eggNOG" id="COG0377">
    <property type="taxonomic scope" value="Bacteria"/>
</dbReference>
<dbReference type="HOGENOM" id="CLU_055737_7_3_5"/>
<dbReference type="OrthoDB" id="9786737at2"/>
<dbReference type="Proteomes" id="UP000001976">
    <property type="component" value="Chromosome"/>
</dbReference>
<dbReference type="GO" id="GO:0005886">
    <property type="term" value="C:plasma membrane"/>
    <property type="evidence" value="ECO:0007669"/>
    <property type="project" value="UniProtKB-SubCell"/>
</dbReference>
<dbReference type="GO" id="GO:0045271">
    <property type="term" value="C:respiratory chain complex I"/>
    <property type="evidence" value="ECO:0007669"/>
    <property type="project" value="TreeGrafter"/>
</dbReference>
<dbReference type="GO" id="GO:0051539">
    <property type="term" value="F:4 iron, 4 sulfur cluster binding"/>
    <property type="evidence" value="ECO:0007669"/>
    <property type="project" value="UniProtKB-KW"/>
</dbReference>
<dbReference type="GO" id="GO:0005506">
    <property type="term" value="F:iron ion binding"/>
    <property type="evidence" value="ECO:0007669"/>
    <property type="project" value="UniProtKB-UniRule"/>
</dbReference>
<dbReference type="GO" id="GO:0008137">
    <property type="term" value="F:NADH dehydrogenase (ubiquinone) activity"/>
    <property type="evidence" value="ECO:0007669"/>
    <property type="project" value="InterPro"/>
</dbReference>
<dbReference type="GO" id="GO:0050136">
    <property type="term" value="F:NADH:ubiquinone reductase (non-electrogenic) activity"/>
    <property type="evidence" value="ECO:0007669"/>
    <property type="project" value="UniProtKB-UniRule"/>
</dbReference>
<dbReference type="GO" id="GO:0048038">
    <property type="term" value="F:quinone binding"/>
    <property type="evidence" value="ECO:0007669"/>
    <property type="project" value="UniProtKB-KW"/>
</dbReference>
<dbReference type="GO" id="GO:0009060">
    <property type="term" value="P:aerobic respiration"/>
    <property type="evidence" value="ECO:0007669"/>
    <property type="project" value="TreeGrafter"/>
</dbReference>
<dbReference type="GO" id="GO:0015990">
    <property type="term" value="P:electron transport coupled proton transport"/>
    <property type="evidence" value="ECO:0007669"/>
    <property type="project" value="TreeGrafter"/>
</dbReference>
<dbReference type="FunFam" id="3.40.50.12280:FF:000001">
    <property type="entry name" value="NADH-quinone oxidoreductase subunit B 2"/>
    <property type="match status" value="1"/>
</dbReference>
<dbReference type="Gene3D" id="3.40.50.12280">
    <property type="match status" value="1"/>
</dbReference>
<dbReference type="HAMAP" id="MF_01356">
    <property type="entry name" value="NDH1_NuoB"/>
    <property type="match status" value="1"/>
</dbReference>
<dbReference type="InterPro" id="IPR006137">
    <property type="entry name" value="NADH_UbQ_OxRdtase-like_20kDa"/>
</dbReference>
<dbReference type="InterPro" id="IPR006138">
    <property type="entry name" value="NADH_UQ_OxRdtase_20Kd_su"/>
</dbReference>
<dbReference type="NCBIfam" id="TIGR01957">
    <property type="entry name" value="nuoB_fam"/>
    <property type="match status" value="1"/>
</dbReference>
<dbReference type="NCBIfam" id="NF005012">
    <property type="entry name" value="PRK06411.1"/>
    <property type="match status" value="1"/>
</dbReference>
<dbReference type="PANTHER" id="PTHR11995">
    <property type="entry name" value="NADH DEHYDROGENASE"/>
    <property type="match status" value="1"/>
</dbReference>
<dbReference type="PANTHER" id="PTHR11995:SF14">
    <property type="entry name" value="NADH DEHYDROGENASE [UBIQUINONE] IRON-SULFUR PROTEIN 7, MITOCHONDRIAL"/>
    <property type="match status" value="1"/>
</dbReference>
<dbReference type="Pfam" id="PF01058">
    <property type="entry name" value="Oxidored_q6"/>
    <property type="match status" value="1"/>
</dbReference>
<dbReference type="SUPFAM" id="SSF56770">
    <property type="entry name" value="HydA/Nqo6-like"/>
    <property type="match status" value="1"/>
</dbReference>
<dbReference type="PROSITE" id="PS01150">
    <property type="entry name" value="COMPLEX1_20K"/>
    <property type="match status" value="1"/>
</dbReference>
<reference key="1">
    <citation type="submission" date="1998-03" db="EMBL/GenBank/DDBJ databases">
        <title>Sinorhizobium meliloti mutant strain SP10 which is impaired in stationary phase survival shows a reduction in the energy charge due to its defect in the energy-conserving NADH dehydrogenase.</title>
        <authorList>
            <person name="Schmidt R."/>
            <person name="Uhde C."/>
            <person name="Nagel A."/>
            <person name="Puehler A."/>
            <person name="Selbitschka W."/>
        </authorList>
    </citation>
    <scope>NUCLEOTIDE SEQUENCE [GENOMIC DNA]</scope>
    <source>
        <strain>RCR2011 / SU47</strain>
    </source>
</reference>
<reference key="2">
    <citation type="submission" date="1999-07" db="EMBL/GenBank/DDBJ databases">
        <title>Rhizobium meliloti carries two sets of nuo genes.</title>
        <authorList>
            <person name="Putnoky P."/>
            <person name="Jady B."/>
            <person name="Chellapilla K.P."/>
            <person name="Barta F."/>
            <person name="Kiss E."/>
        </authorList>
    </citation>
    <scope>NUCLEOTIDE SEQUENCE [GENOMIC DNA]</scope>
    <source>
        <strain>41</strain>
    </source>
</reference>
<reference key="3">
    <citation type="journal article" date="2001" name="Proc. Natl. Acad. Sci. U.S.A.">
        <title>Analysis of the chromosome sequence of the legume symbiont Sinorhizobium meliloti strain 1021.</title>
        <authorList>
            <person name="Capela D."/>
            <person name="Barloy-Hubler F."/>
            <person name="Gouzy J."/>
            <person name="Bothe G."/>
            <person name="Ampe F."/>
            <person name="Batut J."/>
            <person name="Boistard P."/>
            <person name="Becker A."/>
            <person name="Boutry M."/>
            <person name="Cadieu E."/>
            <person name="Dreano S."/>
            <person name="Gloux S."/>
            <person name="Godrie T."/>
            <person name="Goffeau A."/>
            <person name="Kahn D."/>
            <person name="Kiss E."/>
            <person name="Lelaure V."/>
            <person name="Masuy D."/>
            <person name="Pohl T."/>
            <person name="Portetelle D."/>
            <person name="Puehler A."/>
            <person name="Purnelle B."/>
            <person name="Ramsperger U."/>
            <person name="Renard C."/>
            <person name="Thebault P."/>
            <person name="Vandenbol M."/>
            <person name="Weidner S."/>
            <person name="Galibert F."/>
        </authorList>
    </citation>
    <scope>NUCLEOTIDE SEQUENCE [LARGE SCALE GENOMIC DNA]</scope>
    <source>
        <strain>1021</strain>
    </source>
</reference>
<reference key="4">
    <citation type="journal article" date="2001" name="Science">
        <title>The composite genome of the legume symbiont Sinorhizobium meliloti.</title>
        <authorList>
            <person name="Galibert F."/>
            <person name="Finan T.M."/>
            <person name="Long S.R."/>
            <person name="Puehler A."/>
            <person name="Abola P."/>
            <person name="Ampe F."/>
            <person name="Barloy-Hubler F."/>
            <person name="Barnett M.J."/>
            <person name="Becker A."/>
            <person name="Boistard P."/>
            <person name="Bothe G."/>
            <person name="Boutry M."/>
            <person name="Bowser L."/>
            <person name="Buhrmester J."/>
            <person name="Cadieu E."/>
            <person name="Capela D."/>
            <person name="Chain P."/>
            <person name="Cowie A."/>
            <person name="Davis R.W."/>
            <person name="Dreano S."/>
            <person name="Federspiel N.A."/>
            <person name="Fisher R.F."/>
            <person name="Gloux S."/>
            <person name="Godrie T."/>
            <person name="Goffeau A."/>
            <person name="Golding B."/>
            <person name="Gouzy J."/>
            <person name="Gurjal M."/>
            <person name="Hernandez-Lucas I."/>
            <person name="Hong A."/>
            <person name="Huizar L."/>
            <person name="Hyman R.W."/>
            <person name="Jones T."/>
            <person name="Kahn D."/>
            <person name="Kahn M.L."/>
            <person name="Kalman S."/>
            <person name="Keating D.H."/>
            <person name="Kiss E."/>
            <person name="Komp C."/>
            <person name="Lelaure V."/>
            <person name="Masuy D."/>
            <person name="Palm C."/>
            <person name="Peck M.C."/>
            <person name="Pohl T.M."/>
            <person name="Portetelle D."/>
            <person name="Purnelle B."/>
            <person name="Ramsperger U."/>
            <person name="Surzycki R."/>
            <person name="Thebault P."/>
            <person name="Vandenbol M."/>
            <person name="Vorhoelter F.J."/>
            <person name="Weidner S."/>
            <person name="Wells D.H."/>
            <person name="Wong K."/>
            <person name="Yeh K.-C."/>
            <person name="Batut J."/>
        </authorList>
    </citation>
    <scope>NUCLEOTIDE SEQUENCE [LARGE SCALE GENOMIC DNA]</scope>
    <source>
        <strain>1021</strain>
    </source>
</reference>
<protein>
    <recommendedName>
        <fullName evidence="1">NADH-quinone oxidoreductase subunit B 1</fullName>
        <ecNumber evidence="1">7.1.1.-</ecNumber>
    </recommendedName>
    <alternativeName>
        <fullName evidence="1">NADH dehydrogenase I subunit B 1</fullName>
    </alternativeName>
    <alternativeName>
        <fullName evidence="1">NDH-1 subunit B 1</fullName>
    </alternativeName>
</protein>
<organism>
    <name type="scientific">Rhizobium meliloti (strain 1021)</name>
    <name type="common">Ensifer meliloti</name>
    <name type="synonym">Sinorhizobium meliloti</name>
    <dbReference type="NCBI Taxonomy" id="266834"/>
    <lineage>
        <taxon>Bacteria</taxon>
        <taxon>Pseudomonadati</taxon>
        <taxon>Pseudomonadota</taxon>
        <taxon>Alphaproteobacteria</taxon>
        <taxon>Hyphomicrobiales</taxon>
        <taxon>Rhizobiaceae</taxon>
        <taxon>Sinorhizobium/Ensifer group</taxon>
        <taxon>Sinorhizobium</taxon>
    </lineage>
</organism>